<keyword id="KW-0119">Carbohydrate metabolism</keyword>
<keyword id="KW-0868">Chloride</keyword>
<keyword id="KW-0378">Hydrolase</keyword>
<keyword id="KW-0460">Magnesium</keyword>
<keyword id="KW-0479">Metal-binding</keyword>
<keyword id="KW-1185">Reference proteome</keyword>
<name>GPH_SALTY</name>
<accession>Q8ZLK5</accession>
<comment type="function">
    <text evidence="1">Specifically catalyzes the dephosphorylation of 2-phosphoglycolate. Is involved in the dissimilation of the intracellular 2-phosphoglycolate formed during the DNA repair of 3'-phosphoglycolate ends, a major class of DNA lesions induced by oxidative stress.</text>
</comment>
<comment type="catalytic activity">
    <reaction evidence="1">
        <text>2-phosphoglycolate + H2O = glycolate + phosphate</text>
        <dbReference type="Rhea" id="RHEA:14369"/>
        <dbReference type="ChEBI" id="CHEBI:15377"/>
        <dbReference type="ChEBI" id="CHEBI:29805"/>
        <dbReference type="ChEBI" id="CHEBI:43474"/>
        <dbReference type="ChEBI" id="CHEBI:58033"/>
        <dbReference type="EC" id="3.1.3.18"/>
    </reaction>
</comment>
<comment type="cofactor">
    <cofactor evidence="1">
        <name>Mg(2+)</name>
        <dbReference type="ChEBI" id="CHEBI:18420"/>
    </cofactor>
</comment>
<comment type="cofactor">
    <cofactor evidence="1">
        <name>chloride</name>
        <dbReference type="ChEBI" id="CHEBI:17996"/>
    </cofactor>
</comment>
<comment type="pathway">
    <text evidence="1">Organic acid metabolism; glycolate biosynthesis; glycolate from 2-phosphoglycolate: step 1/1.</text>
</comment>
<comment type="subunit">
    <text evidence="1">Monomer.</text>
</comment>
<comment type="similarity">
    <text evidence="1">Belongs to the HAD-like hydrolase superfamily. CbbY/CbbZ/Gph/YieH family.</text>
</comment>
<reference key="1">
    <citation type="journal article" date="2001" name="Nature">
        <title>Complete genome sequence of Salmonella enterica serovar Typhimurium LT2.</title>
        <authorList>
            <person name="McClelland M."/>
            <person name="Sanderson K.E."/>
            <person name="Spieth J."/>
            <person name="Clifton S.W."/>
            <person name="Latreille P."/>
            <person name="Courtney L."/>
            <person name="Porwollik S."/>
            <person name="Ali J."/>
            <person name="Dante M."/>
            <person name="Du F."/>
            <person name="Hou S."/>
            <person name="Layman D."/>
            <person name="Leonard S."/>
            <person name="Nguyen C."/>
            <person name="Scott K."/>
            <person name="Holmes A."/>
            <person name="Grewal N."/>
            <person name="Mulvaney E."/>
            <person name="Ryan E."/>
            <person name="Sun H."/>
            <person name="Florea L."/>
            <person name="Miller W."/>
            <person name="Stoneking T."/>
            <person name="Nhan M."/>
            <person name="Waterston R."/>
            <person name="Wilson R.K."/>
        </authorList>
    </citation>
    <scope>NUCLEOTIDE SEQUENCE [LARGE SCALE GENOMIC DNA]</scope>
    <source>
        <strain>LT2 / SGSC1412 / ATCC 700720</strain>
    </source>
</reference>
<feature type="chain" id="PRO_0000108041" description="Phosphoglycolate phosphatase">
    <location>
        <begin position="1"/>
        <end position="252"/>
    </location>
</feature>
<feature type="active site" description="Nucleophile" evidence="1">
    <location>
        <position position="13"/>
    </location>
</feature>
<feature type="binding site" evidence="1">
    <location>
        <position position="13"/>
    </location>
    <ligand>
        <name>Mg(2+)</name>
        <dbReference type="ChEBI" id="CHEBI:18420"/>
    </ligand>
</feature>
<feature type="binding site" evidence="1">
    <location>
        <position position="15"/>
    </location>
    <ligand>
        <name>Mg(2+)</name>
        <dbReference type="ChEBI" id="CHEBI:18420"/>
    </ligand>
</feature>
<feature type="binding site" evidence="1">
    <location>
        <position position="192"/>
    </location>
    <ligand>
        <name>Mg(2+)</name>
        <dbReference type="ChEBI" id="CHEBI:18420"/>
    </ligand>
</feature>
<sequence length="252" mass="27303">MDKLQNIRGVAFDLDGTLVDSAPGLAAAVDMALYALELPVAGEERVITWIGNGADVLMERALTWAREERATLRKTMGKPPVDEDIPAEEQVRILRKLFDRYYGEVAEEGTVLFPHVADTLGALHASGLSLGLVTNKPTPFVAPLLESLDIAKYFSVVIGGDDVQNKKPHPEPLLLVASRLGMMPEQMLFVGDSRNDIQAAKAAGCPSVGLTYGYNYGEAIALSEPDVIYDSFNDLLPALGLPHSDNQEIKND</sequence>
<organism>
    <name type="scientific">Salmonella typhimurium (strain LT2 / SGSC1412 / ATCC 700720)</name>
    <dbReference type="NCBI Taxonomy" id="99287"/>
    <lineage>
        <taxon>Bacteria</taxon>
        <taxon>Pseudomonadati</taxon>
        <taxon>Pseudomonadota</taxon>
        <taxon>Gammaproteobacteria</taxon>
        <taxon>Enterobacterales</taxon>
        <taxon>Enterobacteriaceae</taxon>
        <taxon>Salmonella</taxon>
    </lineage>
</organism>
<proteinExistence type="inferred from homology"/>
<protein>
    <recommendedName>
        <fullName evidence="1">Phosphoglycolate phosphatase</fullName>
        <shortName evidence="1">PGP</shortName>
        <shortName evidence="1">PGPase</shortName>
        <ecNumber evidence="1">3.1.3.18</ecNumber>
    </recommendedName>
</protein>
<dbReference type="EC" id="3.1.3.18" evidence="1"/>
<dbReference type="EMBL" id="AE006468">
    <property type="protein sequence ID" value="AAL22344.1"/>
    <property type="molecule type" value="Genomic_DNA"/>
</dbReference>
<dbReference type="RefSeq" id="NP_462385.1">
    <property type="nucleotide sequence ID" value="NC_003197.2"/>
</dbReference>
<dbReference type="RefSeq" id="WP_000359655.1">
    <property type="nucleotide sequence ID" value="NC_003197.2"/>
</dbReference>
<dbReference type="SMR" id="Q8ZLK5"/>
<dbReference type="STRING" id="99287.STM3482"/>
<dbReference type="PaxDb" id="99287-STM3482"/>
<dbReference type="GeneID" id="1255005"/>
<dbReference type="KEGG" id="stm:STM3482"/>
<dbReference type="PATRIC" id="fig|99287.12.peg.3680"/>
<dbReference type="HOGENOM" id="CLU_045011_19_1_6"/>
<dbReference type="OMA" id="YLCGKFG"/>
<dbReference type="PhylomeDB" id="Q8ZLK5"/>
<dbReference type="BioCyc" id="SENT99287:STM3482-MONOMER"/>
<dbReference type="UniPathway" id="UPA00865">
    <property type="reaction ID" value="UER00834"/>
</dbReference>
<dbReference type="Proteomes" id="UP000001014">
    <property type="component" value="Chromosome"/>
</dbReference>
<dbReference type="GO" id="GO:0005829">
    <property type="term" value="C:cytosol"/>
    <property type="evidence" value="ECO:0000318"/>
    <property type="project" value="GO_Central"/>
</dbReference>
<dbReference type="GO" id="GO:0046872">
    <property type="term" value="F:metal ion binding"/>
    <property type="evidence" value="ECO:0007669"/>
    <property type="project" value="UniProtKB-KW"/>
</dbReference>
<dbReference type="GO" id="GO:0008967">
    <property type="term" value="F:phosphoglycolate phosphatase activity"/>
    <property type="evidence" value="ECO:0000318"/>
    <property type="project" value="GO_Central"/>
</dbReference>
<dbReference type="GO" id="GO:0005975">
    <property type="term" value="P:carbohydrate metabolic process"/>
    <property type="evidence" value="ECO:0007669"/>
    <property type="project" value="InterPro"/>
</dbReference>
<dbReference type="GO" id="GO:0006281">
    <property type="term" value="P:DNA repair"/>
    <property type="evidence" value="ECO:0000318"/>
    <property type="project" value="GO_Central"/>
</dbReference>
<dbReference type="GO" id="GO:0046295">
    <property type="term" value="P:glycolate biosynthetic process"/>
    <property type="evidence" value="ECO:0007669"/>
    <property type="project" value="UniProtKB-UniRule"/>
</dbReference>
<dbReference type="CDD" id="cd16417">
    <property type="entry name" value="HAD_PGPase"/>
    <property type="match status" value="1"/>
</dbReference>
<dbReference type="FunFam" id="1.10.150.240:FF:000003">
    <property type="entry name" value="Phosphoglycolate phosphatase"/>
    <property type="match status" value="1"/>
</dbReference>
<dbReference type="FunFam" id="3.40.50.1000:FF:000022">
    <property type="entry name" value="Phosphoglycolate phosphatase"/>
    <property type="match status" value="1"/>
</dbReference>
<dbReference type="Gene3D" id="3.40.50.1000">
    <property type="entry name" value="HAD superfamily/HAD-like"/>
    <property type="match status" value="1"/>
</dbReference>
<dbReference type="Gene3D" id="1.10.150.240">
    <property type="entry name" value="Putative phosphatase, domain 2"/>
    <property type="match status" value="1"/>
</dbReference>
<dbReference type="HAMAP" id="MF_00495">
    <property type="entry name" value="GPH_hydrolase_bact"/>
    <property type="match status" value="1"/>
</dbReference>
<dbReference type="InterPro" id="IPR050155">
    <property type="entry name" value="HAD-like_hydrolase_sf"/>
</dbReference>
<dbReference type="InterPro" id="IPR036412">
    <property type="entry name" value="HAD-like_sf"/>
</dbReference>
<dbReference type="InterPro" id="IPR006439">
    <property type="entry name" value="HAD-SF_hydro_IA"/>
</dbReference>
<dbReference type="InterPro" id="IPR041492">
    <property type="entry name" value="HAD_2"/>
</dbReference>
<dbReference type="InterPro" id="IPR023214">
    <property type="entry name" value="HAD_sf"/>
</dbReference>
<dbReference type="InterPro" id="IPR023198">
    <property type="entry name" value="PGP-like_dom2"/>
</dbReference>
<dbReference type="InterPro" id="IPR037512">
    <property type="entry name" value="PGPase_prok"/>
</dbReference>
<dbReference type="NCBIfam" id="TIGR01549">
    <property type="entry name" value="HAD-SF-IA-v1"/>
    <property type="match status" value="1"/>
</dbReference>
<dbReference type="NCBIfam" id="TIGR01509">
    <property type="entry name" value="HAD-SF-IA-v3"/>
    <property type="match status" value="1"/>
</dbReference>
<dbReference type="NCBIfam" id="TIGR01449">
    <property type="entry name" value="PGP_bact"/>
    <property type="match status" value="1"/>
</dbReference>
<dbReference type="NCBIfam" id="NF009694">
    <property type="entry name" value="PRK13222.1-1"/>
    <property type="match status" value="1"/>
</dbReference>
<dbReference type="NCBIfam" id="NF009695">
    <property type="entry name" value="PRK13222.1-2"/>
    <property type="match status" value="1"/>
</dbReference>
<dbReference type="NCBIfam" id="NF009697">
    <property type="entry name" value="PRK13222.1-4"/>
    <property type="match status" value="1"/>
</dbReference>
<dbReference type="PANTHER" id="PTHR43434">
    <property type="entry name" value="PHOSPHOGLYCOLATE PHOSPHATASE"/>
    <property type="match status" value="1"/>
</dbReference>
<dbReference type="PANTHER" id="PTHR43434:SF1">
    <property type="entry name" value="PHOSPHOGLYCOLATE PHOSPHATASE"/>
    <property type="match status" value="1"/>
</dbReference>
<dbReference type="Pfam" id="PF13419">
    <property type="entry name" value="HAD_2"/>
    <property type="match status" value="1"/>
</dbReference>
<dbReference type="PRINTS" id="PR00413">
    <property type="entry name" value="HADHALOGNASE"/>
</dbReference>
<dbReference type="SFLD" id="SFLDG01135">
    <property type="entry name" value="C1.5.6:_HAD__Beta-PGM__Phospha"/>
    <property type="match status" value="1"/>
</dbReference>
<dbReference type="SFLD" id="SFLDG01129">
    <property type="entry name" value="C1.5:_HAD__Beta-PGM__Phosphata"/>
    <property type="match status" value="1"/>
</dbReference>
<dbReference type="SUPFAM" id="SSF56784">
    <property type="entry name" value="HAD-like"/>
    <property type="match status" value="1"/>
</dbReference>
<evidence type="ECO:0000255" key="1">
    <source>
        <dbReference type="HAMAP-Rule" id="MF_00495"/>
    </source>
</evidence>
<gene>
    <name evidence="1" type="primary">gph</name>
    <name type="ordered locus">STM3482</name>
</gene>